<name>RL17_ECO81</name>
<evidence type="ECO:0000255" key="1">
    <source>
        <dbReference type="HAMAP-Rule" id="MF_01368"/>
    </source>
</evidence>
<evidence type="ECO:0000305" key="2"/>
<dbReference type="EMBL" id="CU928162">
    <property type="protein sequence ID" value="CAR10097.2"/>
    <property type="molecule type" value="Genomic_DNA"/>
</dbReference>
<dbReference type="RefSeq" id="WP_001216370.1">
    <property type="nucleotide sequence ID" value="NC_011745.1"/>
</dbReference>
<dbReference type="EMDB" id="EMD-20056"/>
<dbReference type="EMDB" id="EMD-20057"/>
<dbReference type="EMDB" id="EMD-20058"/>
<dbReference type="EMDB" id="EMD-7970"/>
<dbReference type="EMDB" id="EMD-8521"/>
<dbReference type="EMDB" id="EMD-8522"/>
<dbReference type="SMR" id="B7N179"/>
<dbReference type="IntAct" id="B7N179">
    <property type="interactions" value="1"/>
</dbReference>
<dbReference type="GeneID" id="89546962"/>
<dbReference type="KEGG" id="ecq:ECED1_3958"/>
<dbReference type="HOGENOM" id="CLU_074407_2_0_6"/>
<dbReference type="Proteomes" id="UP000000748">
    <property type="component" value="Chromosome"/>
</dbReference>
<dbReference type="GO" id="GO:0022625">
    <property type="term" value="C:cytosolic large ribosomal subunit"/>
    <property type="evidence" value="ECO:0007669"/>
    <property type="project" value="TreeGrafter"/>
</dbReference>
<dbReference type="GO" id="GO:0003735">
    <property type="term" value="F:structural constituent of ribosome"/>
    <property type="evidence" value="ECO:0007669"/>
    <property type="project" value="InterPro"/>
</dbReference>
<dbReference type="GO" id="GO:0006412">
    <property type="term" value="P:translation"/>
    <property type="evidence" value="ECO:0007669"/>
    <property type="project" value="UniProtKB-UniRule"/>
</dbReference>
<dbReference type="FunFam" id="3.90.1030.10:FF:000001">
    <property type="entry name" value="50S ribosomal protein L17"/>
    <property type="match status" value="1"/>
</dbReference>
<dbReference type="Gene3D" id="3.90.1030.10">
    <property type="entry name" value="Ribosomal protein L17"/>
    <property type="match status" value="1"/>
</dbReference>
<dbReference type="HAMAP" id="MF_01368">
    <property type="entry name" value="Ribosomal_bL17"/>
    <property type="match status" value="1"/>
</dbReference>
<dbReference type="InterPro" id="IPR000456">
    <property type="entry name" value="Ribosomal_bL17"/>
</dbReference>
<dbReference type="InterPro" id="IPR047859">
    <property type="entry name" value="Ribosomal_bL17_CS"/>
</dbReference>
<dbReference type="InterPro" id="IPR036373">
    <property type="entry name" value="Ribosomal_bL17_sf"/>
</dbReference>
<dbReference type="NCBIfam" id="TIGR00059">
    <property type="entry name" value="L17"/>
    <property type="match status" value="1"/>
</dbReference>
<dbReference type="PANTHER" id="PTHR14413:SF16">
    <property type="entry name" value="LARGE RIBOSOMAL SUBUNIT PROTEIN BL17M"/>
    <property type="match status" value="1"/>
</dbReference>
<dbReference type="PANTHER" id="PTHR14413">
    <property type="entry name" value="RIBOSOMAL PROTEIN L17"/>
    <property type="match status" value="1"/>
</dbReference>
<dbReference type="Pfam" id="PF01196">
    <property type="entry name" value="Ribosomal_L17"/>
    <property type="match status" value="1"/>
</dbReference>
<dbReference type="SUPFAM" id="SSF64263">
    <property type="entry name" value="Prokaryotic ribosomal protein L17"/>
    <property type="match status" value="1"/>
</dbReference>
<dbReference type="PROSITE" id="PS01167">
    <property type="entry name" value="RIBOSOMAL_L17"/>
    <property type="match status" value="1"/>
</dbReference>
<organism>
    <name type="scientific">Escherichia coli O81 (strain ED1a)</name>
    <dbReference type="NCBI Taxonomy" id="585397"/>
    <lineage>
        <taxon>Bacteria</taxon>
        <taxon>Pseudomonadati</taxon>
        <taxon>Pseudomonadota</taxon>
        <taxon>Gammaproteobacteria</taxon>
        <taxon>Enterobacterales</taxon>
        <taxon>Enterobacteriaceae</taxon>
        <taxon>Escherichia</taxon>
    </lineage>
</organism>
<proteinExistence type="inferred from homology"/>
<sequence>MRHRKSGRQLNRNSSHRQAMFRNMAGSLVRHEIIKTTLPKAKELRRVVEPLITLAKTDSVANRRLAFARTRDNEIVAKLFNELGPRFASRAGGYTRILKCGFRAGDNAPMAYIELVDRSEKTEAAAE</sequence>
<reference key="1">
    <citation type="journal article" date="2009" name="PLoS Genet.">
        <title>Organised genome dynamics in the Escherichia coli species results in highly diverse adaptive paths.</title>
        <authorList>
            <person name="Touchon M."/>
            <person name="Hoede C."/>
            <person name="Tenaillon O."/>
            <person name="Barbe V."/>
            <person name="Baeriswyl S."/>
            <person name="Bidet P."/>
            <person name="Bingen E."/>
            <person name="Bonacorsi S."/>
            <person name="Bouchier C."/>
            <person name="Bouvet O."/>
            <person name="Calteau A."/>
            <person name="Chiapello H."/>
            <person name="Clermont O."/>
            <person name="Cruveiller S."/>
            <person name="Danchin A."/>
            <person name="Diard M."/>
            <person name="Dossat C."/>
            <person name="Karoui M.E."/>
            <person name="Frapy E."/>
            <person name="Garry L."/>
            <person name="Ghigo J.M."/>
            <person name="Gilles A.M."/>
            <person name="Johnson J."/>
            <person name="Le Bouguenec C."/>
            <person name="Lescat M."/>
            <person name="Mangenot S."/>
            <person name="Martinez-Jehanne V."/>
            <person name="Matic I."/>
            <person name="Nassif X."/>
            <person name="Oztas S."/>
            <person name="Petit M.A."/>
            <person name="Pichon C."/>
            <person name="Rouy Z."/>
            <person name="Ruf C.S."/>
            <person name="Schneider D."/>
            <person name="Tourret J."/>
            <person name="Vacherie B."/>
            <person name="Vallenet D."/>
            <person name="Medigue C."/>
            <person name="Rocha E.P.C."/>
            <person name="Denamur E."/>
        </authorList>
    </citation>
    <scope>NUCLEOTIDE SEQUENCE [LARGE SCALE GENOMIC DNA]</scope>
    <source>
        <strain>ED1a</strain>
    </source>
</reference>
<protein>
    <recommendedName>
        <fullName evidence="1">Large ribosomal subunit protein bL17</fullName>
    </recommendedName>
    <alternativeName>
        <fullName evidence="2">50S ribosomal protein L17</fullName>
    </alternativeName>
</protein>
<gene>
    <name evidence="1" type="primary">rplQ</name>
    <name type="ordered locus">ECED1_3958</name>
</gene>
<feature type="chain" id="PRO_1000184023" description="Large ribosomal subunit protein bL17">
    <location>
        <begin position="1"/>
        <end position="127"/>
    </location>
</feature>
<keyword id="KW-0687">Ribonucleoprotein</keyword>
<keyword id="KW-0689">Ribosomal protein</keyword>
<comment type="subunit">
    <text evidence="1">Part of the 50S ribosomal subunit. Contacts protein L32.</text>
</comment>
<comment type="similarity">
    <text evidence="1">Belongs to the bacterial ribosomal protein bL17 family.</text>
</comment>
<accession>B7N179</accession>